<accession>P49189</accession>
<accession>B2R6X1</accession>
<accession>B4DXY7</accession>
<accession>B9EKV4</accession>
<accession>Q5VV90</accession>
<accession>Q6LCL1</accession>
<accession>Q9NZT7</accession>
<organism>
    <name type="scientific">Homo sapiens</name>
    <name type="common">Human</name>
    <dbReference type="NCBI Taxonomy" id="9606"/>
    <lineage>
        <taxon>Eukaryota</taxon>
        <taxon>Metazoa</taxon>
        <taxon>Chordata</taxon>
        <taxon>Craniata</taxon>
        <taxon>Vertebrata</taxon>
        <taxon>Euteleostomi</taxon>
        <taxon>Mammalia</taxon>
        <taxon>Eutheria</taxon>
        <taxon>Euarchontoglires</taxon>
        <taxon>Primates</taxon>
        <taxon>Haplorrhini</taxon>
        <taxon>Catarrhini</taxon>
        <taxon>Hominidae</taxon>
        <taxon>Homo</taxon>
    </lineage>
</organism>
<comment type="function">
    <text evidence="7 8 9 10">Converts gamma-trimethylaminobutyraldehyde into gamma-butyrobetaine with high efficiency (in vitro). Can catalyze the irreversible oxidation of a broad range of aldehydes to the corresponding acids in an NAD-dependent reaction, but with low efficiency. Catalyzes the oxidation of aldehydes arising from biogenic amines and polyamines.</text>
</comment>
<comment type="catalytic activity">
    <reaction evidence="7 9 10">
        <text>4-(trimethylamino)butanal + NAD(+) + H2O = 4-(trimethylamino)butanoate + NADH + 2 H(+)</text>
        <dbReference type="Rhea" id="RHEA:17985"/>
        <dbReference type="ChEBI" id="CHEBI:15377"/>
        <dbReference type="ChEBI" id="CHEBI:15378"/>
        <dbReference type="ChEBI" id="CHEBI:16244"/>
        <dbReference type="ChEBI" id="CHEBI:18020"/>
        <dbReference type="ChEBI" id="CHEBI:57540"/>
        <dbReference type="ChEBI" id="CHEBI:57945"/>
        <dbReference type="EC" id="1.2.1.47"/>
    </reaction>
</comment>
<comment type="catalytic activity">
    <reaction evidence="7 8 9 10">
        <text>an aldehyde + NAD(+) + H2O = a carboxylate + NADH + 2 H(+)</text>
        <dbReference type="Rhea" id="RHEA:16185"/>
        <dbReference type="ChEBI" id="CHEBI:15377"/>
        <dbReference type="ChEBI" id="CHEBI:15378"/>
        <dbReference type="ChEBI" id="CHEBI:17478"/>
        <dbReference type="ChEBI" id="CHEBI:29067"/>
        <dbReference type="ChEBI" id="CHEBI:57540"/>
        <dbReference type="ChEBI" id="CHEBI:57945"/>
        <dbReference type="EC" id="1.2.1.3"/>
    </reaction>
</comment>
<comment type="catalytic activity">
    <reaction evidence="7 8 9 10">
        <text>4-aminobutanal + NAD(+) + H2O = 4-aminobutanoate + NADH + 2 H(+)</text>
        <dbReference type="Rhea" id="RHEA:19105"/>
        <dbReference type="ChEBI" id="CHEBI:15377"/>
        <dbReference type="ChEBI" id="CHEBI:15378"/>
        <dbReference type="ChEBI" id="CHEBI:57540"/>
        <dbReference type="ChEBI" id="CHEBI:57945"/>
        <dbReference type="ChEBI" id="CHEBI:58264"/>
        <dbReference type="ChEBI" id="CHEBI:59888"/>
        <dbReference type="EC" id="1.2.1.19"/>
    </reaction>
</comment>
<comment type="catalytic activity">
    <reaction evidence="8">
        <text>formaldehyde + NAD(+) + H2O = formate + NADH + 2 H(+)</text>
        <dbReference type="Rhea" id="RHEA:16425"/>
        <dbReference type="ChEBI" id="CHEBI:15377"/>
        <dbReference type="ChEBI" id="CHEBI:15378"/>
        <dbReference type="ChEBI" id="CHEBI:15740"/>
        <dbReference type="ChEBI" id="CHEBI:16842"/>
        <dbReference type="ChEBI" id="CHEBI:57540"/>
        <dbReference type="ChEBI" id="CHEBI:57945"/>
        <dbReference type="EC" id="1.2.1.46"/>
    </reaction>
</comment>
<comment type="catalytic activity">
    <reaction evidence="8">
        <text>acetaldehyde + NAD(+) + H2O = acetate + NADH + 2 H(+)</text>
        <dbReference type="Rhea" id="RHEA:25294"/>
        <dbReference type="ChEBI" id="CHEBI:15343"/>
        <dbReference type="ChEBI" id="CHEBI:15377"/>
        <dbReference type="ChEBI" id="CHEBI:15378"/>
        <dbReference type="ChEBI" id="CHEBI:30089"/>
        <dbReference type="ChEBI" id="CHEBI:57540"/>
        <dbReference type="ChEBI" id="CHEBI:57945"/>
        <dbReference type="EC" id="1.2.1.3"/>
    </reaction>
</comment>
<comment type="catalytic activity">
    <reaction evidence="8">
        <text>imidazole-4-acetaldehyde + NAD(+) + H2O = imidazole-4-acetate + NADH + 2 H(+)</text>
        <dbReference type="Rhea" id="RHEA:31059"/>
        <dbReference type="ChEBI" id="CHEBI:15377"/>
        <dbReference type="ChEBI" id="CHEBI:15378"/>
        <dbReference type="ChEBI" id="CHEBI:27398"/>
        <dbReference type="ChEBI" id="CHEBI:57540"/>
        <dbReference type="ChEBI" id="CHEBI:57945"/>
        <dbReference type="ChEBI" id="CHEBI:57969"/>
    </reaction>
</comment>
<comment type="catalytic activity">
    <reaction evidence="8">
        <text>acrolein + NAD(+) + H2O = acrylate + NADH + 2 H(+)</text>
        <dbReference type="Rhea" id="RHEA:69084"/>
        <dbReference type="ChEBI" id="CHEBI:15368"/>
        <dbReference type="ChEBI" id="CHEBI:15377"/>
        <dbReference type="ChEBI" id="CHEBI:15378"/>
        <dbReference type="ChEBI" id="CHEBI:37080"/>
        <dbReference type="ChEBI" id="CHEBI:57540"/>
        <dbReference type="ChEBI" id="CHEBI:57945"/>
    </reaction>
</comment>
<comment type="catalytic activity">
    <reaction evidence="8">
        <text>(5-hydroxyindol-3-yl)acetaldehyde + NAD(+) + H2O = (5-hydroxyindol-3-yl)acetate + NADH + 2 H(+)</text>
        <dbReference type="Rhea" id="RHEA:31215"/>
        <dbReference type="ChEBI" id="CHEBI:15377"/>
        <dbReference type="ChEBI" id="CHEBI:15378"/>
        <dbReference type="ChEBI" id="CHEBI:50157"/>
        <dbReference type="ChEBI" id="CHEBI:57540"/>
        <dbReference type="ChEBI" id="CHEBI:57945"/>
        <dbReference type="ChEBI" id="CHEBI:62622"/>
    </reaction>
</comment>
<comment type="catalytic activity">
    <reaction evidence="8">
        <text>3,4-dihydroxyphenylacetaldehyde + NAD(+) + H2O = 3,4-dihydroxyphenylacetate + NADH + 2 H(+)</text>
        <dbReference type="Rhea" id="RHEA:69080"/>
        <dbReference type="ChEBI" id="CHEBI:15377"/>
        <dbReference type="ChEBI" id="CHEBI:15378"/>
        <dbReference type="ChEBI" id="CHEBI:17612"/>
        <dbReference type="ChEBI" id="CHEBI:27978"/>
        <dbReference type="ChEBI" id="CHEBI:57540"/>
        <dbReference type="ChEBI" id="CHEBI:57945"/>
    </reaction>
</comment>
<comment type="catalytic activity">
    <reaction evidence="8">
        <text>spermine monoaldehyde + NAD(+) + H2O = N-(2-carboxyethyl)spermidine + NADH + 2 H(+)</text>
        <dbReference type="Rhea" id="RHEA:69168"/>
        <dbReference type="ChEBI" id="CHEBI:15377"/>
        <dbReference type="ChEBI" id="CHEBI:15378"/>
        <dbReference type="ChEBI" id="CHEBI:57540"/>
        <dbReference type="ChEBI" id="CHEBI:57945"/>
        <dbReference type="ChEBI" id="CHEBI:180903"/>
        <dbReference type="ChEBI" id="CHEBI:180913"/>
    </reaction>
</comment>
<comment type="catalytic activity">
    <reaction evidence="8">
        <text>propanal + NAD(+) + H2O = propanoate + NADH + 2 H(+)</text>
        <dbReference type="Rhea" id="RHEA:67256"/>
        <dbReference type="ChEBI" id="CHEBI:15377"/>
        <dbReference type="ChEBI" id="CHEBI:15378"/>
        <dbReference type="ChEBI" id="CHEBI:17153"/>
        <dbReference type="ChEBI" id="CHEBI:17272"/>
        <dbReference type="ChEBI" id="CHEBI:57540"/>
        <dbReference type="ChEBI" id="CHEBI:57945"/>
    </reaction>
</comment>
<comment type="catalytic activity">
    <reaction evidence="8">
        <text>butanal + NAD(+) + H2O = butanoate + NADH + 2 H(+)</text>
        <dbReference type="Rhea" id="RHEA:69088"/>
        <dbReference type="ChEBI" id="CHEBI:15377"/>
        <dbReference type="ChEBI" id="CHEBI:15378"/>
        <dbReference type="ChEBI" id="CHEBI:15743"/>
        <dbReference type="ChEBI" id="CHEBI:17968"/>
        <dbReference type="ChEBI" id="CHEBI:57540"/>
        <dbReference type="ChEBI" id="CHEBI:57945"/>
    </reaction>
</comment>
<comment type="catalytic activity">
    <reaction evidence="8">
        <text>pentanal + NAD(+) + H2O = pentanoate + NADH + 2 H(+)</text>
        <dbReference type="Rhea" id="RHEA:69092"/>
        <dbReference type="ChEBI" id="CHEBI:15377"/>
        <dbReference type="ChEBI" id="CHEBI:15378"/>
        <dbReference type="ChEBI" id="CHEBI:31011"/>
        <dbReference type="ChEBI" id="CHEBI:57540"/>
        <dbReference type="ChEBI" id="CHEBI:57945"/>
        <dbReference type="ChEBI" id="CHEBI:84069"/>
    </reaction>
</comment>
<comment type="catalytic activity">
    <reaction evidence="8">
        <text>hexanal + NAD(+) + H2O = hexanoate + NADH + 2 H(+)</text>
        <dbReference type="Rhea" id="RHEA:67276"/>
        <dbReference type="ChEBI" id="CHEBI:15377"/>
        <dbReference type="ChEBI" id="CHEBI:15378"/>
        <dbReference type="ChEBI" id="CHEBI:17120"/>
        <dbReference type="ChEBI" id="CHEBI:57540"/>
        <dbReference type="ChEBI" id="CHEBI:57945"/>
        <dbReference type="ChEBI" id="CHEBI:88528"/>
    </reaction>
</comment>
<comment type="biophysicochemical properties">
    <kinetics>
        <KM evidence="7">68 uM for NAD</KM>
        <KM evidence="9">32 uM for NAD</KM>
        <KM evidence="7">4695 uM for NADP</KM>
        <KM evidence="7">4.8 uM for gamma-trimethylaminobutyraldehyde</KM>
        <KM evidence="10">7 uM for gamma-trimethylaminobutyraldehyde</KM>
        <KM evidence="9">6 uM for gamma-trimethylaminobutyraldehyde</KM>
        <KM evidence="9">53 uM for 3-trimethylaminopropanal</KM>
        <KM evidence="7">28 uM for 4-aminobutyraldehyde</KM>
        <KM evidence="9">67 uM for 4-aminobutyraldehyde</KM>
        <KM evidence="10">70 uM for 4-aminobutyraldehyde</KM>
        <KM evidence="7">7 uM for heptanal</KM>
        <KM evidence="7">7 uM for octanal</KM>
        <KM>11 uM for 4-aminobutyraldehyde</KM>
        <KM evidence="8">59 uM for 5-hydroxyindole-3-acetaldehyde</KM>
        <KM evidence="8">4.9 uM for acrolein</KM>
        <KM evidence="8">2.6 uM for 3,4-dihydroxyphenylacetaldehyde</KM>
        <KM evidence="8">4.6 uM for 4-aminobutyraldehyde</KM>
        <KM evidence="8">410 uM for formaldehyde</KM>
        <KM evidence="8">57 uM for acetaldehyde</KM>
        <KM evidence="8">9.5 uM for propionaldehyde</KM>
        <KM evidence="8">2.8 uM for butyraldehyde</KM>
        <KM evidence="8">1.4 uM for pentaldehyde</KM>
        <KM evidence="8">0.6 uM for hexanaldehyde</KM>
    </kinetics>
    <phDependence>
        <text>Optimum pH is about 9.4 with propionaldehyde as substrate, and 7.5 with 4-aminobutyraldehyde as substrate.</text>
    </phDependence>
</comment>
<comment type="pathway">
    <text evidence="19 20">Amine and polyamine biosynthesis; carnitine biosynthesis.</text>
</comment>
<comment type="subunit">
    <text evidence="9">Homotetramer.</text>
</comment>
<comment type="subcellular location">
    <subcellularLocation>
        <location evidence="4">Cytoplasm</location>
        <location evidence="4">Cytosol</location>
    </subcellularLocation>
    <subcellularLocation>
        <location evidence="8">Cytoplasm</location>
    </subcellularLocation>
</comment>
<comment type="alternative products">
    <event type="alternative splicing"/>
    <event type="alternative initiation"/>
    <isoform>
        <id>P49189-1</id>
        <name>1</name>
        <sequence type="displayed"/>
    </isoform>
    <isoform>
        <id>P49189-2</id>
        <name>2</name>
        <sequence type="described" ref="VSP_056305"/>
    </isoform>
    <isoform>
        <id>P49189-3</id>
        <name>3</name>
        <sequence type="described" ref="VSP_060045"/>
    </isoform>
</comment>
<comment type="tissue specificity">
    <text evidence="10 11">Detected in brain (at protein level) (PubMed:8645224). High expression in adult liver, skeletal muscle, and kidney. Low levels in heart, pancreas, lung and brain (PubMed:8786138). Expressed in all regions of the brain. Expression levels are variable in the different brain areas, with the highest levels in the spinal cord and the lowest in the occipital pole.</text>
</comment>
<comment type="developmental stage">
    <text>Strongly expressed in human embryonic brain (gestational age 12 weeks).</text>
</comment>
<comment type="miscellaneous">
    <molecule>Isoform 2</molecule>
    <text evidence="18">Produced by alternative splicing.</text>
</comment>
<comment type="miscellaneous">
    <molecule>Isoform 3</molecule>
    <text evidence="18">Produced by alternative initiation. Contains a predicted signal peptide at positions 1-24.</text>
</comment>
<comment type="similarity">
    <text evidence="18">Belongs to the aldehyde dehydrogenase family.</text>
</comment>
<feature type="chain" id="PRO_0000434351" description="4-trimethylaminobutyraldehyde dehydrogenase">
    <location>
        <begin position="1"/>
        <end position="494"/>
    </location>
</feature>
<feature type="initiator methionine" description="Removed; alternate" evidence="12 24 26 27">
    <location>
        <position position="1"/>
    </location>
</feature>
<feature type="chain" id="PRO_0000056485" description="4-trimethylaminobutyraldehyde dehydrogenase, N-terminally processed">
    <location>
        <begin position="2"/>
        <end position="494"/>
    </location>
</feature>
<feature type="active site" description="Proton acceptor" evidence="5 6">
    <location>
        <position position="254"/>
    </location>
</feature>
<feature type="active site" description="Nucleophile" evidence="5 6">
    <location>
        <position position="288"/>
    </location>
</feature>
<feature type="binding site" evidence="2">
    <location>
        <position position="180"/>
    </location>
    <ligand>
        <name>NAD(+)</name>
        <dbReference type="ChEBI" id="CHEBI:57540"/>
    </ligand>
</feature>
<feature type="binding site" evidence="2">
    <location>
        <begin position="232"/>
        <end position="236"/>
    </location>
    <ligand>
        <name>NAD(+)</name>
        <dbReference type="ChEBI" id="CHEBI:57540"/>
    </ligand>
</feature>
<feature type="binding site" evidence="2">
    <location>
        <position position="391"/>
    </location>
    <ligand>
        <name>NAD(+)</name>
        <dbReference type="ChEBI" id="CHEBI:57540"/>
    </ligand>
</feature>
<feature type="site" description="Transition state stabilizer" evidence="1">
    <location>
        <position position="157"/>
    </location>
</feature>
<feature type="modified residue" description="N-acetylserine; in 4-trimethylaminobutyraldehyde dehydrogenase, N-terminally processed" evidence="12 24 26 27">
    <location>
        <position position="2"/>
    </location>
</feature>
<feature type="modified residue" description="N6-acetyllysine; alternate" evidence="3">
    <location>
        <position position="30"/>
    </location>
</feature>
<feature type="modified residue" description="N6-succinyllysine; alternate" evidence="3">
    <location>
        <position position="30"/>
    </location>
</feature>
<feature type="modified residue" description="N6-succinyllysine" evidence="3">
    <location>
        <position position="59"/>
    </location>
</feature>
<feature type="modified residue" description="N6-acetyllysine" evidence="25">
    <location>
        <position position="298"/>
    </location>
</feature>
<feature type="modified residue" description="N6-acetyllysine; alternate" evidence="3">
    <location>
        <position position="303"/>
    </location>
</feature>
<feature type="modified residue" description="N6-succinyllysine; alternate" evidence="3">
    <location>
        <position position="303"/>
    </location>
</feature>
<feature type="modified residue" description="N6-acetyllysine" evidence="3">
    <location>
        <position position="344"/>
    </location>
</feature>
<feature type="splice variant" id="VSP_056305" description="In isoform 2." evidence="14">
    <location>
        <begin position="1"/>
        <end position="70"/>
    </location>
</feature>
<feature type="splice variant" id="VSP_060045" description="In isoform 3.">
    <original>M</original>
    <variation>MFLRAGLAALSPLLRSLRPSPVAAM</variation>
    <location>
        <position position="1"/>
    </location>
</feature>
<feature type="sequence variant" id="VAR_011304" description="In allele ALDH9A1*2." evidence="10 11">
    <original>C</original>
    <variation>S</variation>
    <location>
        <position position="116"/>
    </location>
</feature>
<feature type="sequence conflict" description="In Ref. 1; AAB18827." evidence="18" ref="1">
    <original>RVEPADA</original>
    <variation>AGAGGR</variation>
    <location>
        <begin position="19"/>
        <end position="25"/>
    </location>
</feature>
<feature type="sequence conflict" description="In Ref. 9; AA sequence." evidence="18" ref="9">
    <original>C</original>
    <variation>Q</variation>
    <location>
        <position position="150"/>
    </location>
</feature>
<feature type="sequence conflict" description="In Ref. 9; AA sequence." evidence="18" ref="9">
    <original>P</original>
    <variation>W</variation>
    <location>
        <position position="159"/>
    </location>
</feature>
<feature type="sequence conflict" description="In Ref. 9; AA sequence." evidence="18" ref="9">
    <original>A</original>
    <variation>R</variation>
    <location>
        <position position="172"/>
    </location>
</feature>
<feature type="turn" evidence="29">
    <location>
        <begin position="3"/>
        <end position="5"/>
    </location>
</feature>
<feature type="strand" evidence="29">
    <location>
        <begin position="12"/>
        <end position="15"/>
    </location>
</feature>
<feature type="strand" evidence="29">
    <location>
        <begin position="18"/>
        <end position="20"/>
    </location>
</feature>
<feature type="strand" evidence="29">
    <location>
        <begin position="23"/>
        <end position="32"/>
    </location>
</feature>
<feature type="turn" evidence="29">
    <location>
        <begin position="34"/>
        <end position="36"/>
    </location>
</feature>
<feature type="strand" evidence="29">
    <location>
        <begin position="39"/>
        <end position="46"/>
    </location>
</feature>
<feature type="helix" evidence="29">
    <location>
        <begin position="48"/>
        <end position="65"/>
    </location>
</feature>
<feature type="helix" evidence="29">
    <location>
        <begin position="70"/>
        <end position="86"/>
    </location>
</feature>
<feature type="helix" evidence="29">
    <location>
        <begin position="88"/>
        <end position="99"/>
    </location>
</feature>
<feature type="helix" evidence="29">
    <location>
        <begin position="103"/>
        <end position="126"/>
    </location>
</feature>
<feature type="strand" evidence="29">
    <location>
        <begin position="129"/>
        <end position="133"/>
    </location>
</feature>
<feature type="helix" evidence="29">
    <location>
        <begin position="135"/>
        <end position="137"/>
    </location>
</feature>
<feature type="strand" evidence="29">
    <location>
        <begin position="139"/>
        <end position="146"/>
    </location>
</feature>
<feature type="strand" evidence="29">
    <location>
        <begin position="148"/>
        <end position="153"/>
    </location>
</feature>
<feature type="strand" evidence="29">
    <location>
        <begin position="156"/>
        <end position="158"/>
    </location>
</feature>
<feature type="helix" evidence="29">
    <location>
        <begin position="159"/>
        <end position="172"/>
    </location>
</feature>
<feature type="strand" evidence="29">
    <location>
        <begin position="176"/>
        <end position="180"/>
    </location>
</feature>
<feature type="helix" evidence="29">
    <location>
        <begin position="188"/>
        <end position="199"/>
    </location>
</feature>
<feature type="strand" evidence="29">
    <location>
        <begin position="205"/>
        <end position="208"/>
    </location>
</feature>
<feature type="helix" evidence="29">
    <location>
        <begin position="213"/>
        <end position="221"/>
    </location>
</feature>
<feature type="strand" evidence="29">
    <location>
        <begin position="225"/>
        <end position="229"/>
    </location>
</feature>
<feature type="helix" evidence="30">
    <location>
        <begin position="234"/>
        <end position="247"/>
    </location>
</feature>
<feature type="strand" evidence="30">
    <location>
        <begin position="251"/>
        <end position="254"/>
    </location>
</feature>
<feature type="strand" evidence="29">
    <location>
        <begin position="260"/>
        <end position="263"/>
    </location>
</feature>
<feature type="strand" evidence="28">
    <location>
        <begin position="265"/>
        <end position="267"/>
    </location>
</feature>
<feature type="helix" evidence="29">
    <location>
        <begin position="269"/>
        <end position="281"/>
    </location>
</feature>
<feature type="helix" evidence="29">
    <location>
        <begin position="282"/>
        <end position="285"/>
    </location>
</feature>
<feature type="strand" evidence="29">
    <location>
        <begin position="287"/>
        <end position="290"/>
    </location>
</feature>
<feature type="strand" evidence="29">
    <location>
        <begin position="293"/>
        <end position="297"/>
    </location>
</feature>
<feature type="turn" evidence="29">
    <location>
        <begin position="298"/>
        <end position="300"/>
    </location>
</feature>
<feature type="helix" evidence="29">
    <location>
        <begin position="301"/>
        <end position="312"/>
    </location>
</feature>
<feature type="helix" evidence="29">
    <location>
        <begin position="333"/>
        <end position="348"/>
    </location>
</feature>
<feature type="strand" evidence="29">
    <location>
        <begin position="352"/>
        <end position="355"/>
    </location>
</feature>
<feature type="helix" evidence="29">
    <location>
        <begin position="365"/>
        <end position="367"/>
    </location>
</feature>
<feature type="strand" evidence="29">
    <location>
        <begin position="376"/>
        <end position="380"/>
    </location>
</feature>
<feature type="helix" evidence="29">
    <location>
        <begin position="386"/>
        <end position="389"/>
    </location>
</feature>
<feature type="strand" evidence="29">
    <location>
        <begin position="394"/>
        <end position="402"/>
    </location>
</feature>
<feature type="helix" evidence="29">
    <location>
        <begin position="405"/>
        <end position="412"/>
    </location>
</feature>
<feature type="strand" evidence="29">
    <location>
        <begin position="419"/>
        <end position="424"/>
    </location>
</feature>
<feature type="helix" evidence="29">
    <location>
        <begin position="428"/>
        <end position="437"/>
    </location>
</feature>
<feature type="strand" evidence="29">
    <location>
        <begin position="441"/>
        <end position="446"/>
    </location>
</feature>
<feature type="helix" evidence="29">
    <location>
        <begin position="457"/>
        <end position="459"/>
    </location>
</feature>
<feature type="helix" evidence="30">
    <location>
        <begin position="461"/>
        <end position="463"/>
    </location>
</feature>
<feature type="helix" evidence="29">
    <location>
        <begin position="468"/>
        <end position="476"/>
    </location>
</feature>
<feature type="strand" evidence="29">
    <location>
        <begin position="478"/>
        <end position="485"/>
    </location>
</feature>
<keyword id="KW-0002">3D-structure</keyword>
<keyword id="KW-0007">Acetylation</keyword>
<keyword id="KW-0024">Alternative initiation</keyword>
<keyword id="KW-0025">Alternative splicing</keyword>
<keyword id="KW-0963">Cytoplasm</keyword>
<keyword id="KW-0903">Direct protein sequencing</keyword>
<keyword id="KW-0520">NAD</keyword>
<keyword id="KW-0560">Oxidoreductase</keyword>
<keyword id="KW-1267">Proteomics identification</keyword>
<keyword id="KW-1185">Reference proteome</keyword>
<gene>
    <name type="primary">ALDH9A1</name>
    <name type="synonym">ALDH4</name>
    <name type="synonym">ALDH7</name>
    <name evidence="17" type="synonym">ALDH9</name>
</gene>
<proteinExistence type="evidence at protein level"/>
<reference key="1">
    <citation type="journal article" date="1996" name="Genomics">
        <title>Human gamma-aminobutyraldehyde dehydrogenase (ALDH9): cDNA sequence, genomic organization, polymorphism, chromosomal localization, and tissue expression.</title>
        <authorList>
            <person name="Lin S.W."/>
            <person name="Chen J.C."/>
            <person name="Hsu L.C."/>
            <person name="Hsieh C.-L."/>
            <person name="Yoshida A."/>
        </authorList>
    </citation>
    <scope>NUCLEOTIDE SEQUENCE [MRNA] (ISOFORM 1)</scope>
    <scope>TISSUE SPECIFICITY</scope>
    <scope>VARIANT SER-116</scope>
    <source>
        <tissue>Liver</tissue>
    </source>
</reference>
<reference key="2">
    <citation type="journal article" date="2000" name="J. Biol. Chem.">
        <title>Molecular and biochemical characterization of rat gamma-trimethylaminobutyraldehyde dehydrogenase and evidence for the involvement of human aldehyde dehydrogenase 9 in carnitine biosynthesis.</title>
        <authorList>
            <person name="Vaz F.M."/>
            <person name="Fouchier S.W."/>
            <person name="Ofman R."/>
            <person name="Sommer M."/>
            <person name="Wanders R.J.A."/>
        </authorList>
    </citation>
    <scope>NUCLEOTIDE SEQUENCE [MRNA] (ISOFORM 1)</scope>
    <scope>FUNCTION</scope>
    <scope>CATALYTIC ACTIVITY</scope>
    <scope>BIOPHYSICOCHEMICAL PROPERTIES</scope>
    <scope>PATHWAY</scope>
    <source>
        <tissue>Liver</tissue>
    </source>
</reference>
<reference key="3">
    <citation type="journal article" date="2004" name="Nat. Genet.">
        <title>Complete sequencing and characterization of 21,243 full-length human cDNAs.</title>
        <authorList>
            <person name="Ota T."/>
            <person name="Suzuki Y."/>
            <person name="Nishikawa T."/>
            <person name="Otsuki T."/>
            <person name="Sugiyama T."/>
            <person name="Irie R."/>
            <person name="Wakamatsu A."/>
            <person name="Hayashi K."/>
            <person name="Sato H."/>
            <person name="Nagai K."/>
            <person name="Kimura K."/>
            <person name="Makita H."/>
            <person name="Sekine M."/>
            <person name="Obayashi M."/>
            <person name="Nishi T."/>
            <person name="Shibahara T."/>
            <person name="Tanaka T."/>
            <person name="Ishii S."/>
            <person name="Yamamoto J."/>
            <person name="Saito K."/>
            <person name="Kawai Y."/>
            <person name="Isono Y."/>
            <person name="Nakamura Y."/>
            <person name="Nagahari K."/>
            <person name="Murakami K."/>
            <person name="Yasuda T."/>
            <person name="Iwayanagi T."/>
            <person name="Wagatsuma M."/>
            <person name="Shiratori A."/>
            <person name="Sudo H."/>
            <person name="Hosoiri T."/>
            <person name="Kaku Y."/>
            <person name="Kodaira H."/>
            <person name="Kondo H."/>
            <person name="Sugawara M."/>
            <person name="Takahashi M."/>
            <person name="Kanda K."/>
            <person name="Yokoi T."/>
            <person name="Furuya T."/>
            <person name="Kikkawa E."/>
            <person name="Omura Y."/>
            <person name="Abe K."/>
            <person name="Kamihara K."/>
            <person name="Katsuta N."/>
            <person name="Sato K."/>
            <person name="Tanikawa M."/>
            <person name="Yamazaki M."/>
            <person name="Ninomiya K."/>
            <person name="Ishibashi T."/>
            <person name="Yamashita H."/>
            <person name="Murakawa K."/>
            <person name="Fujimori K."/>
            <person name="Tanai H."/>
            <person name="Kimata M."/>
            <person name="Watanabe M."/>
            <person name="Hiraoka S."/>
            <person name="Chiba Y."/>
            <person name="Ishida S."/>
            <person name="Ono Y."/>
            <person name="Takiguchi S."/>
            <person name="Watanabe S."/>
            <person name="Yosida M."/>
            <person name="Hotuta T."/>
            <person name="Kusano J."/>
            <person name="Kanehori K."/>
            <person name="Takahashi-Fujii A."/>
            <person name="Hara H."/>
            <person name="Tanase T.-O."/>
            <person name="Nomura Y."/>
            <person name="Togiya S."/>
            <person name="Komai F."/>
            <person name="Hara R."/>
            <person name="Takeuchi K."/>
            <person name="Arita M."/>
            <person name="Imose N."/>
            <person name="Musashino K."/>
            <person name="Yuuki H."/>
            <person name="Oshima A."/>
            <person name="Sasaki N."/>
            <person name="Aotsuka S."/>
            <person name="Yoshikawa Y."/>
            <person name="Matsunawa H."/>
            <person name="Ichihara T."/>
            <person name="Shiohata N."/>
            <person name="Sano S."/>
            <person name="Moriya S."/>
            <person name="Momiyama H."/>
            <person name="Satoh N."/>
            <person name="Takami S."/>
            <person name="Terashima Y."/>
            <person name="Suzuki O."/>
            <person name="Nakagawa S."/>
            <person name="Senoh A."/>
            <person name="Mizoguchi H."/>
            <person name="Goto Y."/>
            <person name="Shimizu F."/>
            <person name="Wakebe H."/>
            <person name="Hishigaki H."/>
            <person name="Watanabe T."/>
            <person name="Sugiyama A."/>
            <person name="Takemoto M."/>
            <person name="Kawakami B."/>
            <person name="Yamazaki M."/>
            <person name="Watanabe K."/>
            <person name="Kumagai A."/>
            <person name="Itakura S."/>
            <person name="Fukuzumi Y."/>
            <person name="Fujimori Y."/>
            <person name="Komiyama M."/>
            <person name="Tashiro H."/>
            <person name="Tanigami A."/>
            <person name="Fujiwara T."/>
            <person name="Ono T."/>
            <person name="Yamada K."/>
            <person name="Fujii Y."/>
            <person name="Ozaki K."/>
            <person name="Hirao M."/>
            <person name="Ohmori Y."/>
            <person name="Kawabata A."/>
            <person name="Hikiji T."/>
            <person name="Kobatake N."/>
            <person name="Inagaki H."/>
            <person name="Ikema Y."/>
            <person name="Okamoto S."/>
            <person name="Okitani R."/>
            <person name="Kawakami T."/>
            <person name="Noguchi S."/>
            <person name="Itoh T."/>
            <person name="Shigeta K."/>
            <person name="Senba T."/>
            <person name="Matsumura K."/>
            <person name="Nakajima Y."/>
            <person name="Mizuno T."/>
            <person name="Morinaga M."/>
            <person name="Sasaki M."/>
            <person name="Togashi T."/>
            <person name="Oyama M."/>
            <person name="Hata H."/>
            <person name="Watanabe M."/>
            <person name="Komatsu T."/>
            <person name="Mizushima-Sugano J."/>
            <person name="Satoh T."/>
            <person name="Shirai Y."/>
            <person name="Takahashi Y."/>
            <person name="Nakagawa K."/>
            <person name="Okumura K."/>
            <person name="Nagase T."/>
            <person name="Nomura N."/>
            <person name="Kikuchi H."/>
            <person name="Masuho Y."/>
            <person name="Yamashita R."/>
            <person name="Nakai K."/>
            <person name="Yada T."/>
            <person name="Nakamura Y."/>
            <person name="Ohara O."/>
            <person name="Isogai T."/>
            <person name="Sugano S."/>
        </authorList>
    </citation>
    <scope>NUCLEOTIDE SEQUENCE [LARGE SCALE MRNA] (ISOFORMS 1 AND 2)</scope>
    <source>
        <tissue>Spleen</tissue>
        <tissue>Testis</tissue>
    </source>
</reference>
<reference key="4">
    <citation type="journal article" date="2006" name="Nature">
        <title>The DNA sequence and biological annotation of human chromosome 1.</title>
        <authorList>
            <person name="Gregory S.G."/>
            <person name="Barlow K.F."/>
            <person name="McLay K.E."/>
            <person name="Kaul R."/>
            <person name="Swarbreck D."/>
            <person name="Dunham A."/>
            <person name="Scott C.E."/>
            <person name="Howe K.L."/>
            <person name="Woodfine K."/>
            <person name="Spencer C.C.A."/>
            <person name="Jones M.C."/>
            <person name="Gillson C."/>
            <person name="Searle S."/>
            <person name="Zhou Y."/>
            <person name="Kokocinski F."/>
            <person name="McDonald L."/>
            <person name="Evans R."/>
            <person name="Phillips K."/>
            <person name="Atkinson A."/>
            <person name="Cooper R."/>
            <person name="Jones C."/>
            <person name="Hall R.E."/>
            <person name="Andrews T.D."/>
            <person name="Lloyd C."/>
            <person name="Ainscough R."/>
            <person name="Almeida J.P."/>
            <person name="Ambrose K.D."/>
            <person name="Anderson F."/>
            <person name="Andrew R.W."/>
            <person name="Ashwell R.I.S."/>
            <person name="Aubin K."/>
            <person name="Babbage A.K."/>
            <person name="Bagguley C.L."/>
            <person name="Bailey J."/>
            <person name="Beasley H."/>
            <person name="Bethel G."/>
            <person name="Bird C.P."/>
            <person name="Bray-Allen S."/>
            <person name="Brown J.Y."/>
            <person name="Brown A.J."/>
            <person name="Buckley D."/>
            <person name="Burton J."/>
            <person name="Bye J."/>
            <person name="Carder C."/>
            <person name="Chapman J.C."/>
            <person name="Clark S.Y."/>
            <person name="Clarke G."/>
            <person name="Clee C."/>
            <person name="Cobley V."/>
            <person name="Collier R.E."/>
            <person name="Corby N."/>
            <person name="Coville G.J."/>
            <person name="Davies J."/>
            <person name="Deadman R."/>
            <person name="Dunn M."/>
            <person name="Earthrowl M."/>
            <person name="Ellington A.G."/>
            <person name="Errington H."/>
            <person name="Frankish A."/>
            <person name="Frankland J."/>
            <person name="French L."/>
            <person name="Garner P."/>
            <person name="Garnett J."/>
            <person name="Gay L."/>
            <person name="Ghori M.R.J."/>
            <person name="Gibson R."/>
            <person name="Gilby L.M."/>
            <person name="Gillett W."/>
            <person name="Glithero R.J."/>
            <person name="Grafham D.V."/>
            <person name="Griffiths C."/>
            <person name="Griffiths-Jones S."/>
            <person name="Grocock R."/>
            <person name="Hammond S."/>
            <person name="Harrison E.S.I."/>
            <person name="Hart E."/>
            <person name="Haugen E."/>
            <person name="Heath P.D."/>
            <person name="Holmes S."/>
            <person name="Holt K."/>
            <person name="Howden P.J."/>
            <person name="Hunt A.R."/>
            <person name="Hunt S.E."/>
            <person name="Hunter G."/>
            <person name="Isherwood J."/>
            <person name="James R."/>
            <person name="Johnson C."/>
            <person name="Johnson D."/>
            <person name="Joy A."/>
            <person name="Kay M."/>
            <person name="Kershaw J.K."/>
            <person name="Kibukawa M."/>
            <person name="Kimberley A.M."/>
            <person name="King A."/>
            <person name="Knights A.J."/>
            <person name="Lad H."/>
            <person name="Laird G."/>
            <person name="Lawlor S."/>
            <person name="Leongamornlert D.A."/>
            <person name="Lloyd D.M."/>
            <person name="Loveland J."/>
            <person name="Lovell J."/>
            <person name="Lush M.J."/>
            <person name="Lyne R."/>
            <person name="Martin S."/>
            <person name="Mashreghi-Mohammadi M."/>
            <person name="Matthews L."/>
            <person name="Matthews N.S.W."/>
            <person name="McLaren S."/>
            <person name="Milne S."/>
            <person name="Mistry S."/>
            <person name="Moore M.J.F."/>
            <person name="Nickerson T."/>
            <person name="O'Dell C.N."/>
            <person name="Oliver K."/>
            <person name="Palmeiri A."/>
            <person name="Palmer S.A."/>
            <person name="Parker A."/>
            <person name="Patel D."/>
            <person name="Pearce A.V."/>
            <person name="Peck A.I."/>
            <person name="Pelan S."/>
            <person name="Phelps K."/>
            <person name="Phillimore B.J."/>
            <person name="Plumb R."/>
            <person name="Rajan J."/>
            <person name="Raymond C."/>
            <person name="Rouse G."/>
            <person name="Saenphimmachak C."/>
            <person name="Sehra H.K."/>
            <person name="Sheridan E."/>
            <person name="Shownkeen R."/>
            <person name="Sims S."/>
            <person name="Skuce C.D."/>
            <person name="Smith M."/>
            <person name="Steward C."/>
            <person name="Subramanian S."/>
            <person name="Sycamore N."/>
            <person name="Tracey A."/>
            <person name="Tromans A."/>
            <person name="Van Helmond Z."/>
            <person name="Wall M."/>
            <person name="Wallis J.M."/>
            <person name="White S."/>
            <person name="Whitehead S.L."/>
            <person name="Wilkinson J.E."/>
            <person name="Willey D.L."/>
            <person name="Williams H."/>
            <person name="Wilming L."/>
            <person name="Wray P.W."/>
            <person name="Wu Z."/>
            <person name="Coulson A."/>
            <person name="Vaudin M."/>
            <person name="Sulston J.E."/>
            <person name="Durbin R.M."/>
            <person name="Hubbard T."/>
            <person name="Wooster R."/>
            <person name="Dunham I."/>
            <person name="Carter N.P."/>
            <person name="McVean G."/>
            <person name="Ross M.T."/>
            <person name="Harrow J."/>
            <person name="Olson M.V."/>
            <person name="Beck S."/>
            <person name="Rogers J."/>
            <person name="Bentley D.R."/>
        </authorList>
    </citation>
    <scope>NUCLEOTIDE SEQUENCE [LARGE SCALE GENOMIC DNA]</scope>
</reference>
<reference key="5">
    <citation type="submission" date="2005-07" db="EMBL/GenBank/DDBJ databases">
        <authorList>
            <person name="Mural R.J."/>
            <person name="Istrail S."/>
            <person name="Sutton G.G."/>
            <person name="Florea L."/>
            <person name="Halpern A.L."/>
            <person name="Mobarry C.M."/>
            <person name="Lippert R."/>
            <person name="Walenz B."/>
            <person name="Shatkay H."/>
            <person name="Dew I."/>
            <person name="Miller J.R."/>
            <person name="Flanigan M.J."/>
            <person name="Edwards N.J."/>
            <person name="Bolanos R."/>
            <person name="Fasulo D."/>
            <person name="Halldorsson B.V."/>
            <person name="Hannenhalli S."/>
            <person name="Turner R."/>
            <person name="Yooseph S."/>
            <person name="Lu F."/>
            <person name="Nusskern D.R."/>
            <person name="Shue B.C."/>
            <person name="Zheng X.H."/>
            <person name="Zhong F."/>
            <person name="Delcher A.L."/>
            <person name="Huson D.H."/>
            <person name="Kravitz S.A."/>
            <person name="Mouchard L."/>
            <person name="Reinert K."/>
            <person name="Remington K.A."/>
            <person name="Clark A.G."/>
            <person name="Waterman M.S."/>
            <person name="Eichler E.E."/>
            <person name="Adams M.D."/>
            <person name="Hunkapiller M.W."/>
            <person name="Myers E.W."/>
            <person name="Venter J.C."/>
        </authorList>
    </citation>
    <scope>NUCLEOTIDE SEQUENCE [LARGE SCALE GENOMIC DNA]</scope>
</reference>
<reference key="6">
    <citation type="journal article" date="2004" name="Genome Res.">
        <title>The status, quality, and expansion of the NIH full-length cDNA project: the Mammalian Gene Collection (MGC).</title>
        <authorList>
            <consortium name="The MGC Project Team"/>
        </authorList>
    </citation>
    <scope>NUCLEOTIDE SEQUENCE [LARGE SCALE MRNA] (ISOFORM 3)</scope>
</reference>
<reference key="7">
    <citation type="submission" date="2008-03" db="UniProtKB">
        <authorList>
            <person name="Bienvenut W.V."/>
            <person name="Heiserich L."/>
            <person name="Gottlieb E."/>
        </authorList>
    </citation>
    <scope>PROTEIN SEQUENCE OF 2-15; 247-258; 299-310; 315-326 AND 472-481</scope>
    <scope>CLEAVAGE OF INITIATOR METHIONINE</scope>
    <scope>ACETYLATION AT SER-2</scope>
    <scope>IDENTIFICATION BY MASS SPECTROMETRY</scope>
    <source>
        <tissue>Colon carcinoma</tissue>
    </source>
</reference>
<reference key="8">
    <citation type="journal article" date="1996" name="Biochem. J.">
        <title>Aldehyde dehydrogenase from adult human brain that dehydrogenates gamma-aminobutyraldehyde: purification, characterization, cloning and distribution.</title>
        <authorList>
            <person name="Kikonyogo A."/>
            <person name="Pietruszko R."/>
        </authorList>
    </citation>
    <scope>PROTEIN SEQUENCE OF 259-274; 353-366; 412-426 AND 434-453</scope>
    <scope>NUCLEOTIDE SEQUENCE [MRNA] OF 29-494</scope>
    <scope>FUNCTION</scope>
    <scope>CATALYTIC ACTIVITY</scope>
    <scope>BIOPHYSICOCHEMICAL PROPERTIES</scope>
    <scope>TISSUE SPECIFICITY</scope>
    <scope>VARIANT SER-116</scope>
    <source>
        <tissue>Brain</tissue>
    </source>
</reference>
<reference key="9">
    <citation type="journal article" date="1993" name="Eur. J. Biochem.">
        <title>Human aldehyde dehydrogenase. cDNA cloning and primary structure of the enzyme that catalyzes dehydrogenation of 4-aminobutyraldehyde.</title>
        <authorList>
            <person name="Kurys G."/>
            <person name="Shah P.C."/>
            <person name="Kikonyogo A."/>
            <person name="Reed D."/>
            <person name="Ambroziak W."/>
            <person name="Pietruszko R."/>
        </authorList>
    </citation>
    <scope>NUCLEOTIDE SEQUENCE [MRNA] OF 33-494 (ISOFORM 1)</scope>
    <scope>PARTIAL PROTEIN SEQUENCE</scope>
</reference>
<reference key="10">
    <citation type="journal article" date="1989" name="J. Biol. Chem.">
        <title>Human aldehyde dehydrogenase. Purification and characterization of a third isozyme with low Km for gamma-aminobutyraldehyde.</title>
        <authorList>
            <person name="Kurys G."/>
            <person name="Ambroziak W."/>
            <person name="Pietruszko R."/>
        </authorList>
    </citation>
    <scope>CHARACTERIZATION</scope>
    <source>
        <tissue>Liver</tissue>
    </source>
</reference>
<reference key="11">
    <citation type="journal article" date="1991" name="Comp. Biochem. Physiol.">
        <title>Aldehyde dehydrogenase (EC 1.2.1.3): comparison of subcellular localization of the third isozyme that dehydrogenates gamma-aminobutyraldehyde in rat, guinea pig and human liver.</title>
        <authorList>
            <person name="Ambroziak W."/>
            <person name="Kurys G."/>
            <person name="Pietruszko R."/>
        </authorList>
    </citation>
    <scope>FUNCTION</scope>
    <scope>CATALYTIC ACTIVITY</scope>
    <scope>SUBCELLULAR LOCATION</scope>
</reference>
<reference key="12">
    <citation type="journal article" date="1991" name="J. Biol. Chem.">
        <title>Human aldehyde dehydrogenase. Activity with aldehyde metabolites of monoamines, diamines, and polyamines.</title>
        <authorList>
            <person name="Ambroziak W."/>
            <person name="Pietruszko R."/>
        </authorList>
    </citation>
    <scope>FUNCTION</scope>
    <scope>CATALYTIC ACTIVITY</scope>
    <scope>BIOPHYSICOCHEMICAL PROPERTIES</scope>
</reference>
<reference key="13">
    <citation type="journal article" date="2009" name="Anal. Chem.">
        <title>Lys-N and trypsin cover complementary parts of the phosphoproteome in a refined SCX-based approach.</title>
        <authorList>
            <person name="Gauci S."/>
            <person name="Helbig A.O."/>
            <person name="Slijper M."/>
            <person name="Krijgsveld J."/>
            <person name="Heck A.J."/>
            <person name="Mohammed S."/>
        </authorList>
    </citation>
    <scope>ACETYLATION [LARGE SCALE ANALYSIS] AT SER-2</scope>
    <scope>CLEAVAGE OF INITIATOR METHIONINE [LARGE SCALE ANALYSIS]</scope>
    <scope>IDENTIFICATION BY MASS SPECTROMETRY [LARGE SCALE ANALYSIS]</scope>
</reference>
<reference key="14">
    <citation type="journal article" date="2009" name="Science">
        <title>Lysine acetylation targets protein complexes and co-regulates major cellular functions.</title>
        <authorList>
            <person name="Choudhary C."/>
            <person name="Kumar C."/>
            <person name="Gnad F."/>
            <person name="Nielsen M.L."/>
            <person name="Rehman M."/>
            <person name="Walther T.C."/>
            <person name="Olsen J.V."/>
            <person name="Mann M."/>
        </authorList>
    </citation>
    <scope>ACETYLATION [LARGE SCALE ANALYSIS] AT LYS-298</scope>
    <scope>IDENTIFICATION BY MASS SPECTROMETRY [LARGE SCALE ANALYSIS]</scope>
</reference>
<reference key="15">
    <citation type="journal article" date="2011" name="BMC Syst. Biol.">
        <title>Initial characterization of the human central proteome.</title>
        <authorList>
            <person name="Burkard T.R."/>
            <person name="Planyavsky M."/>
            <person name="Kaupe I."/>
            <person name="Breitwieser F.P."/>
            <person name="Buerckstuemmer T."/>
            <person name="Bennett K.L."/>
            <person name="Superti-Furga G."/>
            <person name="Colinge J."/>
        </authorList>
    </citation>
    <scope>IDENTIFICATION BY MASS SPECTROMETRY [LARGE SCALE ANALYSIS]</scope>
</reference>
<reference key="16">
    <citation type="journal article" date="2012" name="Mol. Cell. Proteomics">
        <title>Comparative large-scale characterisation of plant vs. mammal proteins reveals similar and idiosyncratic N-alpha acetylation features.</title>
        <authorList>
            <person name="Bienvenut W.V."/>
            <person name="Sumpton D."/>
            <person name="Martinez A."/>
            <person name="Lilla S."/>
            <person name="Espagne C."/>
            <person name="Meinnel T."/>
            <person name="Giglione C."/>
        </authorList>
    </citation>
    <scope>ACETYLATION [LARGE SCALE ANALYSIS] AT SER-2</scope>
    <scope>CLEAVAGE OF INITIATOR METHIONINE [LARGE SCALE ANALYSIS]</scope>
    <scope>IDENTIFICATION BY MASS SPECTROMETRY [LARGE SCALE ANALYSIS]</scope>
</reference>
<reference key="17">
    <citation type="journal article" date="2012" name="Proc. Natl. Acad. Sci. U.S.A.">
        <title>N-terminal acetylome analyses and functional insights of the N-terminal acetyltransferase NatB.</title>
        <authorList>
            <person name="Van Damme P."/>
            <person name="Lasa M."/>
            <person name="Polevoda B."/>
            <person name="Gazquez C."/>
            <person name="Elosegui-Artola A."/>
            <person name="Kim D.S."/>
            <person name="De Juan-Pardo E."/>
            <person name="Demeyer K."/>
            <person name="Hole K."/>
            <person name="Larrea E."/>
            <person name="Timmerman E."/>
            <person name="Prieto J."/>
            <person name="Arnesen T."/>
            <person name="Sherman F."/>
            <person name="Gevaert K."/>
            <person name="Aldabe R."/>
        </authorList>
    </citation>
    <scope>ACETYLATION [LARGE SCALE ANALYSIS] AT SER-2</scope>
    <scope>CLEAVAGE OF INITIATOR METHIONINE [LARGE SCALE ANALYSIS]</scope>
    <scope>IDENTIFICATION BY MASS SPECTROMETRY [LARGE SCALE ANALYSIS]</scope>
</reference>
<reference key="18">
    <citation type="journal article" date="2014" name="J. Proteomics">
        <title>An enzyme assisted RP-RPLC approach for in-depth analysis of human liver phosphoproteome.</title>
        <authorList>
            <person name="Bian Y."/>
            <person name="Song C."/>
            <person name="Cheng K."/>
            <person name="Dong M."/>
            <person name="Wang F."/>
            <person name="Huang J."/>
            <person name="Sun D."/>
            <person name="Wang L."/>
            <person name="Ye M."/>
            <person name="Zou H."/>
        </authorList>
    </citation>
    <scope>IDENTIFICATION BY MASS SPECTROMETRY [LARGE SCALE ANALYSIS]</scope>
    <source>
        <tissue>Liver</tissue>
    </source>
</reference>
<reference key="19">
    <citation type="journal article" date="2015" name="Proteomics">
        <title>N-terminome analysis of the human mitochondrial proteome.</title>
        <authorList>
            <person name="Vaca Jacome A.S."/>
            <person name="Rabilloud T."/>
            <person name="Schaeffer-Reiss C."/>
            <person name="Rompais M."/>
            <person name="Ayoub D."/>
            <person name="Lane L."/>
            <person name="Bairoch A."/>
            <person name="Van Dorsselaer A."/>
            <person name="Carapito C."/>
        </authorList>
    </citation>
    <scope>IDENTIFICATION BY MASS SPECTROMETRY [LARGE SCALE ANALYSIS]</scope>
</reference>
<reference evidence="21 22 23" key="20">
    <citation type="journal article" date="2019" name="Biosci. Rep.">
        <title>Kinetic and structural analysis of human ALDH9A1.</title>
        <authorList>
            <person name="Koncitikova R."/>
            <person name="Vigouroux A."/>
            <person name="Kopecna M."/>
            <person name="Sebela M."/>
            <person name="Morera S."/>
            <person name="Kopecny D."/>
        </authorList>
    </citation>
    <scope>X-RAY CRYSTALLOGRAPHY (2.30 ANGSTROMS)</scope>
    <scope>FUNCTION</scope>
    <scope>CATALYTIC ACTIVITY</scope>
    <scope>BIOPHYSICOCHEMICAL PROPERTIES</scope>
    <scope>SUBUNIT</scope>
    <scope>PATHWAY</scope>
</reference>
<sequence length="494" mass="53802">MSTGTFVVSQPLNYRGGARVEPADASGTEKAFEPATGRVIATFTCSGEKEVNLAVQNAKAAFKIWSQKSGMERCRILLEAARIIREREDEIATMECINNGKSIFEARLDIDISWQCLEYYAGLAASMAGEHIQLPGGSFGYTRREPLGVCVGIGAWNYPFQIASWKSAPALACGNAMVFKPSPFTPVSALLLAEIYSEAGVPPGLFNVVQGGAATGQFLCQHPDVAKVSFTGSVPTGMKIMEMSAKGIKPVTLELGGKSPLIIFSDCDMNNAVKGALMANFLTQGQVCCNGTRVFVQKEILDKFTEEVVKQTQRIKIGDPLLEDTRMGPLINRPHLERVLGFVKVAKEQGAKVLCGGDIYVPEDPKLKDGYYMRPCVLTNCRDDMTCVKEEIFGPVMSILSFDTEAEVLERANDTTFGLAAGVFTRDIQRAHRVVAELQAGTCFINNYNVSPVELPFGGYKKSGFGRENGRVTIEYYSQLKTVCVEMGDVESAF</sequence>
<name>AL9A1_HUMAN</name>
<evidence type="ECO:0000250" key="1"/>
<evidence type="ECO:0000250" key="2">
    <source>
        <dbReference type="UniProtKB" id="P56533"/>
    </source>
</evidence>
<evidence type="ECO:0000250" key="3">
    <source>
        <dbReference type="UniProtKB" id="Q9JLJ2"/>
    </source>
</evidence>
<evidence type="ECO:0000250" key="4">
    <source>
        <dbReference type="UniProtKB" id="Q9JLJ3"/>
    </source>
</evidence>
<evidence type="ECO:0000255" key="5">
    <source>
        <dbReference type="PROSITE-ProRule" id="PRU10007"/>
    </source>
</evidence>
<evidence type="ECO:0000255" key="6">
    <source>
        <dbReference type="PROSITE-ProRule" id="PRU10008"/>
    </source>
</evidence>
<evidence type="ECO:0000269" key="7">
    <source>
    </source>
</evidence>
<evidence type="ECO:0000269" key="8">
    <source>
    </source>
</evidence>
<evidence type="ECO:0000269" key="9">
    <source>
    </source>
</evidence>
<evidence type="ECO:0000269" key="10">
    <source>
    </source>
</evidence>
<evidence type="ECO:0000269" key="11">
    <source>
    </source>
</evidence>
<evidence type="ECO:0000269" key="12">
    <source ref="7"/>
</evidence>
<evidence type="ECO:0000303" key="13">
    <source>
    </source>
</evidence>
<evidence type="ECO:0000303" key="14">
    <source>
    </source>
</evidence>
<evidence type="ECO:0000303" key="15">
    <source>
    </source>
</evidence>
<evidence type="ECO:0000303" key="16">
    <source>
    </source>
</evidence>
<evidence type="ECO:0000303" key="17">
    <source>
    </source>
</evidence>
<evidence type="ECO:0000305" key="18"/>
<evidence type="ECO:0000305" key="19">
    <source>
    </source>
</evidence>
<evidence type="ECO:0000305" key="20">
    <source>
    </source>
</evidence>
<evidence type="ECO:0007744" key="21">
    <source>
        <dbReference type="PDB" id="6QAK"/>
    </source>
</evidence>
<evidence type="ECO:0007744" key="22">
    <source>
        <dbReference type="PDB" id="6QAO"/>
    </source>
</evidence>
<evidence type="ECO:0007744" key="23">
    <source>
        <dbReference type="PDB" id="6QAP"/>
    </source>
</evidence>
<evidence type="ECO:0007744" key="24">
    <source>
    </source>
</evidence>
<evidence type="ECO:0007744" key="25">
    <source>
    </source>
</evidence>
<evidence type="ECO:0007744" key="26">
    <source>
    </source>
</evidence>
<evidence type="ECO:0007744" key="27">
    <source>
    </source>
</evidence>
<evidence type="ECO:0007829" key="28">
    <source>
        <dbReference type="PDB" id="6QAO"/>
    </source>
</evidence>
<evidence type="ECO:0007829" key="29">
    <source>
        <dbReference type="PDB" id="6QAP"/>
    </source>
</evidence>
<evidence type="ECO:0007829" key="30">
    <source>
        <dbReference type="PDB" id="6VR6"/>
    </source>
</evidence>
<protein>
    <recommendedName>
        <fullName>4-trimethylaminobutyraldehyde dehydrogenase</fullName>
        <shortName evidence="13">TMABA-DH</shortName>
        <shortName evidence="15">TMABALDH</shortName>
        <ecNumber evidence="7 9 10">1.2.1.47</ecNumber>
    </recommendedName>
    <alternativeName>
        <fullName evidence="16">Aldehyde dehydrogenase E3 isozyme</fullName>
    </alternativeName>
    <alternativeName>
        <fullName>Aldehyde dehydrogenase family 9 member A1</fullName>
        <ecNumber evidence="7 8 9 10">1.2.1.3</ecNumber>
    </alternativeName>
    <alternativeName>
        <fullName>Formaldehyde dehydrogenase</fullName>
        <ecNumber evidence="8">1.2.1.46</ecNumber>
    </alternativeName>
    <alternativeName>
        <fullName evidence="13">Gamma-aminobutyraldehyde dehydrogenase</fullName>
        <ecNumber evidence="7 8 9 10">1.2.1.19</ecNumber>
    </alternativeName>
    <alternativeName>
        <fullName>R-aminobutyraldehyde dehydrogenase</fullName>
    </alternativeName>
    <component>
        <recommendedName>
            <fullName>4-trimethylaminobutyraldehyde dehydrogenase, N-terminally processed</fullName>
        </recommendedName>
    </component>
</protein>
<dbReference type="EC" id="1.2.1.47" evidence="7 9 10"/>
<dbReference type="EC" id="1.2.1.3" evidence="7 8 9 10"/>
<dbReference type="EC" id="1.2.1.46" evidence="8"/>
<dbReference type="EC" id="1.2.1.19" evidence="7 8 9 10"/>
<dbReference type="EMBL" id="U34252">
    <property type="protein sequence ID" value="AAB18827.1"/>
    <property type="molecule type" value="mRNA"/>
</dbReference>
<dbReference type="EMBL" id="AF172093">
    <property type="protein sequence ID" value="AAF43600.1"/>
    <property type="molecule type" value="mRNA"/>
</dbReference>
<dbReference type="EMBL" id="AK302183">
    <property type="protein sequence ID" value="BAG63549.1"/>
    <property type="molecule type" value="mRNA"/>
</dbReference>
<dbReference type="EMBL" id="AK302191">
    <property type="protein sequence ID" value="BAG63554.1"/>
    <property type="molecule type" value="mRNA"/>
</dbReference>
<dbReference type="EMBL" id="AK312751">
    <property type="protein sequence ID" value="BAG35618.1"/>
    <property type="molecule type" value="mRNA"/>
</dbReference>
<dbReference type="EMBL" id="AL451074">
    <property type="status" value="NOT_ANNOTATED_CDS"/>
    <property type="molecule type" value="Genomic_DNA"/>
</dbReference>
<dbReference type="EMBL" id="CH471067">
    <property type="protein sequence ID" value="EAW90758.1"/>
    <property type="molecule type" value="Genomic_DNA"/>
</dbReference>
<dbReference type="EMBL" id="BC151140">
    <property type="protein sequence ID" value="AAI51141.1"/>
    <property type="molecule type" value="mRNA"/>
</dbReference>
<dbReference type="EMBL" id="BC151141">
    <property type="protein sequence ID" value="AAI51142.1"/>
    <property type="molecule type" value="mRNA"/>
</dbReference>
<dbReference type="EMBL" id="U50203">
    <property type="protein sequence ID" value="AAB06721.1"/>
    <property type="molecule type" value="mRNA"/>
</dbReference>
<dbReference type="EMBL" id="X75425">
    <property type="protein sequence ID" value="CAA53176.1"/>
    <property type="molecule type" value="mRNA"/>
</dbReference>
<dbReference type="CCDS" id="CCDS1250.2">
    <molecule id="P49189-3"/>
</dbReference>
<dbReference type="PIR" id="G02054">
    <property type="entry name" value="S39532"/>
</dbReference>
<dbReference type="RefSeq" id="NP_000687.3">
    <molecule id="P49189-3"/>
    <property type="nucleotide sequence ID" value="NM_000696.3"/>
</dbReference>
<dbReference type="RefSeq" id="NP_001352703.1">
    <molecule id="P49189-2"/>
    <property type="nucleotide sequence ID" value="NM_001365774.2"/>
</dbReference>
<dbReference type="RefSeq" id="XP_011507596.1">
    <property type="nucleotide sequence ID" value="XM_011509294.2"/>
</dbReference>
<dbReference type="PDB" id="6QAK">
    <property type="method" value="X-ray"/>
    <property type="resolution" value="2.50 A"/>
    <property type="chains" value="A/B/C/D/E/F/G/H=1-494"/>
</dbReference>
<dbReference type="PDB" id="6QAO">
    <property type="method" value="X-ray"/>
    <property type="resolution" value="2.89 A"/>
    <property type="chains" value="A/B/C/D/E/F/G/H=1-494"/>
</dbReference>
<dbReference type="PDB" id="6QAP">
    <property type="method" value="X-ray"/>
    <property type="resolution" value="2.30 A"/>
    <property type="chains" value="A/B/C/D=1-494"/>
</dbReference>
<dbReference type="PDB" id="6VR6">
    <property type="method" value="X-ray"/>
    <property type="resolution" value="2.50 A"/>
    <property type="chains" value="A/B/C/D/E/F/G/H=2-494"/>
</dbReference>
<dbReference type="PDB" id="6VWF">
    <property type="method" value="X-ray"/>
    <property type="resolution" value="2.64 A"/>
    <property type="chains" value="A/B=1-494"/>
</dbReference>
<dbReference type="PDBsum" id="6QAK"/>
<dbReference type="PDBsum" id="6QAO"/>
<dbReference type="PDBsum" id="6QAP"/>
<dbReference type="PDBsum" id="6VR6"/>
<dbReference type="PDBsum" id="6VWF"/>
<dbReference type="SASBDB" id="P49189"/>
<dbReference type="SMR" id="P49189"/>
<dbReference type="BioGRID" id="106725">
    <property type="interactions" value="85"/>
</dbReference>
<dbReference type="FunCoup" id="P49189">
    <property type="interactions" value="914"/>
</dbReference>
<dbReference type="IntAct" id="P49189">
    <property type="interactions" value="12"/>
</dbReference>
<dbReference type="MINT" id="P49189"/>
<dbReference type="STRING" id="9606.ENSP00000346827"/>
<dbReference type="ChEMBL" id="CHEMBL2542"/>
<dbReference type="DrugBank" id="DB00157">
    <property type="generic name" value="NADH"/>
</dbReference>
<dbReference type="GlyGen" id="P49189">
    <property type="glycosylation" value="1 site, 1 O-linked glycan (1 site)"/>
</dbReference>
<dbReference type="iPTMnet" id="P49189"/>
<dbReference type="MetOSite" id="P49189"/>
<dbReference type="PhosphoSitePlus" id="P49189"/>
<dbReference type="SwissPalm" id="P49189"/>
<dbReference type="BioMuta" id="ALDH9A1"/>
<dbReference type="DMDM" id="62511242"/>
<dbReference type="REPRODUCTION-2DPAGE" id="IPI00479877"/>
<dbReference type="CPTAC" id="CPTAC-309"/>
<dbReference type="CPTAC" id="CPTAC-310"/>
<dbReference type="jPOST" id="P49189"/>
<dbReference type="MassIVE" id="P49189"/>
<dbReference type="PaxDb" id="9606-ENSP00000346827"/>
<dbReference type="PeptideAtlas" id="P49189"/>
<dbReference type="ProteomicsDB" id="5480"/>
<dbReference type="ProteomicsDB" id="55968">
    <molecule id="P49189-1"/>
</dbReference>
<dbReference type="Pumba" id="P49189"/>
<dbReference type="Antibodypedia" id="1661">
    <property type="antibodies" value="257 antibodies from 31 providers"/>
</dbReference>
<dbReference type="DNASU" id="223"/>
<dbReference type="Ensembl" id="ENST00000354775.5">
    <molecule id="P49189-3"/>
    <property type="protein sequence ID" value="ENSP00000346827.4"/>
    <property type="gene ID" value="ENSG00000143149.13"/>
</dbReference>
<dbReference type="GeneID" id="223"/>
<dbReference type="KEGG" id="hsa:223"/>
<dbReference type="MANE-Select" id="ENST00000354775.5">
    <molecule id="P49189-3"/>
    <property type="protein sequence ID" value="ENSP00000346827.4"/>
    <property type="RefSeq nucleotide sequence ID" value="NM_000696.4"/>
    <property type="RefSeq protein sequence ID" value="NP_000687.3"/>
</dbReference>
<dbReference type="UCSC" id="uc001gdh.2">
    <molecule id="P49189-1"/>
    <property type="organism name" value="human"/>
</dbReference>
<dbReference type="AGR" id="HGNC:412"/>
<dbReference type="CTD" id="223"/>
<dbReference type="DisGeNET" id="223"/>
<dbReference type="GeneCards" id="ALDH9A1"/>
<dbReference type="HGNC" id="HGNC:412">
    <property type="gene designation" value="ALDH9A1"/>
</dbReference>
<dbReference type="HPA" id="ENSG00000143149">
    <property type="expression patterns" value="Low tissue specificity"/>
</dbReference>
<dbReference type="MIM" id="602733">
    <property type="type" value="gene"/>
</dbReference>
<dbReference type="neXtProt" id="NX_P49189"/>
<dbReference type="OpenTargets" id="ENSG00000143149"/>
<dbReference type="PharmGKB" id="PA24706"/>
<dbReference type="VEuPathDB" id="HostDB:ENSG00000143149"/>
<dbReference type="eggNOG" id="KOG2450">
    <property type="taxonomic scope" value="Eukaryota"/>
</dbReference>
<dbReference type="GeneTree" id="ENSGT00940000163309"/>
<dbReference type="HOGENOM" id="CLU_005391_0_0_1"/>
<dbReference type="InParanoid" id="P49189"/>
<dbReference type="OMA" id="CREGIRM"/>
<dbReference type="OrthoDB" id="310895at2759"/>
<dbReference type="PAN-GO" id="P49189">
    <property type="GO annotations" value="2 GO annotations based on evolutionary models"/>
</dbReference>
<dbReference type="PhylomeDB" id="P49189"/>
<dbReference type="TreeFam" id="TF314257"/>
<dbReference type="BioCyc" id="MetaCyc:HS06992-MONOMER"/>
<dbReference type="BRENDA" id="1.2.1.47">
    <property type="organism ID" value="2681"/>
</dbReference>
<dbReference type="PathwayCommons" id="P49189"/>
<dbReference type="Reactome" id="R-HSA-71262">
    <property type="pathway name" value="Carnitine synthesis"/>
</dbReference>
<dbReference type="SABIO-RK" id="P49189"/>
<dbReference type="SignaLink" id="P49189"/>
<dbReference type="SIGNOR" id="P49189"/>
<dbReference type="UniPathway" id="UPA00118"/>
<dbReference type="BioGRID-ORCS" id="223">
    <property type="hits" value="46 hits in 1160 CRISPR screens"/>
</dbReference>
<dbReference type="ChiTaRS" id="ALDH9A1">
    <property type="organism name" value="human"/>
</dbReference>
<dbReference type="GeneWiki" id="Aldehyde_dehydrogenase_9_family,_member_A1"/>
<dbReference type="GenomeRNAi" id="223"/>
<dbReference type="Pharos" id="P49189">
    <property type="development level" value="Tbio"/>
</dbReference>
<dbReference type="PRO" id="PR:P49189"/>
<dbReference type="Proteomes" id="UP000005640">
    <property type="component" value="Chromosome 1"/>
</dbReference>
<dbReference type="RNAct" id="P49189">
    <property type="molecule type" value="protein"/>
</dbReference>
<dbReference type="Bgee" id="ENSG00000143149">
    <property type="expression patterns" value="Expressed in right adrenal gland cortex and 101 other cell types or tissues"/>
</dbReference>
<dbReference type="GO" id="GO:0005737">
    <property type="term" value="C:cytoplasm"/>
    <property type="evidence" value="ECO:0000314"/>
    <property type="project" value="UniProtKB"/>
</dbReference>
<dbReference type="GO" id="GO:0005829">
    <property type="term" value="C:cytosol"/>
    <property type="evidence" value="ECO:0000304"/>
    <property type="project" value="Reactome"/>
</dbReference>
<dbReference type="GO" id="GO:0070062">
    <property type="term" value="C:extracellular exosome"/>
    <property type="evidence" value="ECO:0007005"/>
    <property type="project" value="UniProtKB"/>
</dbReference>
<dbReference type="GO" id="GO:0005739">
    <property type="term" value="C:mitochondrion"/>
    <property type="evidence" value="ECO:0006056"/>
    <property type="project" value="FlyBase"/>
</dbReference>
<dbReference type="GO" id="GO:0047105">
    <property type="term" value="F:4-trimethylammoniobutyraldehyde dehydrogenase activity"/>
    <property type="evidence" value="ECO:0000314"/>
    <property type="project" value="UniProtKB"/>
</dbReference>
<dbReference type="GO" id="GO:0140087">
    <property type="term" value="F:acetaldehyde dehydrogenase (NAD+) activity"/>
    <property type="evidence" value="ECO:0007669"/>
    <property type="project" value="RHEA"/>
</dbReference>
<dbReference type="GO" id="GO:0004029">
    <property type="term" value="F:aldehyde dehydrogenase (NAD+) activity"/>
    <property type="evidence" value="ECO:0000314"/>
    <property type="project" value="UniProtKB"/>
</dbReference>
<dbReference type="GO" id="GO:0019145">
    <property type="term" value="F:aminobutyraldehyde dehydrogenase (NAD+) activity"/>
    <property type="evidence" value="ECO:0000314"/>
    <property type="project" value="UniProtKB"/>
</dbReference>
<dbReference type="GO" id="GO:0018467">
    <property type="term" value="F:formaldehyde dehydrogenase (NAD+) activity"/>
    <property type="evidence" value="ECO:0000314"/>
    <property type="project" value="UniProtKB"/>
</dbReference>
<dbReference type="GO" id="GO:0036094">
    <property type="term" value="F:small molecule binding"/>
    <property type="evidence" value="ECO:0000269"/>
    <property type="project" value="DisProt"/>
</dbReference>
<dbReference type="GO" id="GO:0006081">
    <property type="term" value="P:aldehyde metabolic process"/>
    <property type="evidence" value="ECO:0000314"/>
    <property type="project" value="UniProtKB"/>
</dbReference>
<dbReference type="GO" id="GO:0045329">
    <property type="term" value="P:carnitine biosynthetic process"/>
    <property type="evidence" value="ECO:0000304"/>
    <property type="project" value="Reactome"/>
</dbReference>
<dbReference type="GO" id="GO:0051289">
    <property type="term" value="P:protein homotetramerization"/>
    <property type="evidence" value="ECO:0000314"/>
    <property type="project" value="UniProtKB"/>
</dbReference>
<dbReference type="CDD" id="cd07090">
    <property type="entry name" value="ALDH_F9_TMBADH"/>
    <property type="match status" value="1"/>
</dbReference>
<dbReference type="DisProt" id="DP02783"/>
<dbReference type="FunFam" id="3.40.309.10:FF:000019">
    <property type="entry name" value="4-trimethylaminobutyraldehyde dehydrogenase isoform X1"/>
    <property type="match status" value="1"/>
</dbReference>
<dbReference type="FunFam" id="3.40.605.10:FF:000016">
    <property type="entry name" value="4-trimethylaminobutyraldehyde dehydrogenase isoform X1"/>
    <property type="match status" value="1"/>
</dbReference>
<dbReference type="Gene3D" id="3.40.605.10">
    <property type="entry name" value="Aldehyde Dehydrogenase, Chain A, domain 1"/>
    <property type="match status" value="1"/>
</dbReference>
<dbReference type="Gene3D" id="3.40.309.10">
    <property type="entry name" value="Aldehyde Dehydrogenase, Chain A, domain 2"/>
    <property type="match status" value="1"/>
</dbReference>
<dbReference type="InterPro" id="IPR016161">
    <property type="entry name" value="Ald_DH/histidinol_DH"/>
</dbReference>
<dbReference type="InterPro" id="IPR016163">
    <property type="entry name" value="Ald_DH_C"/>
</dbReference>
<dbReference type="InterPro" id="IPR016160">
    <property type="entry name" value="Ald_DH_CS_CYS"/>
</dbReference>
<dbReference type="InterPro" id="IPR029510">
    <property type="entry name" value="Ald_DH_CS_GLU"/>
</dbReference>
<dbReference type="InterPro" id="IPR016162">
    <property type="entry name" value="Ald_DH_N"/>
</dbReference>
<dbReference type="InterPro" id="IPR015590">
    <property type="entry name" value="Aldehyde_DH_dom"/>
</dbReference>
<dbReference type="NCBIfam" id="NF009725">
    <property type="entry name" value="PRK13252.1"/>
    <property type="match status" value="1"/>
</dbReference>
<dbReference type="PANTHER" id="PTHR11699">
    <property type="entry name" value="ALDEHYDE DEHYDROGENASE-RELATED"/>
    <property type="match status" value="1"/>
</dbReference>
<dbReference type="Pfam" id="PF00171">
    <property type="entry name" value="Aldedh"/>
    <property type="match status" value="1"/>
</dbReference>
<dbReference type="SUPFAM" id="SSF53720">
    <property type="entry name" value="ALDH-like"/>
    <property type="match status" value="1"/>
</dbReference>
<dbReference type="PROSITE" id="PS00070">
    <property type="entry name" value="ALDEHYDE_DEHYDR_CYS"/>
    <property type="match status" value="1"/>
</dbReference>
<dbReference type="PROSITE" id="PS00687">
    <property type="entry name" value="ALDEHYDE_DEHYDR_GLU"/>
    <property type="match status" value="1"/>
</dbReference>